<reference key="1">
    <citation type="submission" date="2008-01" db="EMBL/GenBank/DDBJ databases">
        <title>Complete sequence of Shewanella halifaxensis HAW-EB4.</title>
        <authorList>
            <consortium name="US DOE Joint Genome Institute"/>
            <person name="Copeland A."/>
            <person name="Lucas S."/>
            <person name="Lapidus A."/>
            <person name="Glavina del Rio T."/>
            <person name="Dalin E."/>
            <person name="Tice H."/>
            <person name="Bruce D."/>
            <person name="Goodwin L."/>
            <person name="Pitluck S."/>
            <person name="Sims D."/>
            <person name="Brettin T."/>
            <person name="Detter J.C."/>
            <person name="Han C."/>
            <person name="Kuske C.R."/>
            <person name="Schmutz J."/>
            <person name="Larimer F."/>
            <person name="Land M."/>
            <person name="Hauser L."/>
            <person name="Kyrpides N."/>
            <person name="Kim E."/>
            <person name="Zhao J.-S."/>
            <person name="Richardson P."/>
        </authorList>
    </citation>
    <scope>NUCLEOTIDE SEQUENCE [LARGE SCALE GENOMIC DNA]</scope>
    <source>
        <strain>HAW-EB4</strain>
    </source>
</reference>
<gene>
    <name evidence="1" type="primary">mnmG</name>
    <name evidence="1" type="synonym">gidA</name>
    <name type="ordered locus">Shal_4305</name>
</gene>
<keyword id="KW-0963">Cytoplasm</keyword>
<keyword id="KW-0274">FAD</keyword>
<keyword id="KW-0285">Flavoprotein</keyword>
<keyword id="KW-0520">NAD</keyword>
<keyword id="KW-0819">tRNA processing</keyword>
<name>MNMG_SHEHH</name>
<accession>B0TQG5</accession>
<protein>
    <recommendedName>
        <fullName evidence="1">tRNA uridine 5-carboxymethylaminomethyl modification enzyme MnmG</fullName>
    </recommendedName>
    <alternativeName>
        <fullName evidence="1">Glucose-inhibited division protein A</fullName>
    </alternativeName>
</protein>
<dbReference type="EMBL" id="CP000931">
    <property type="protein sequence ID" value="ABZ78845.1"/>
    <property type="molecule type" value="Genomic_DNA"/>
</dbReference>
<dbReference type="RefSeq" id="WP_012279348.1">
    <property type="nucleotide sequence ID" value="NC_010334.1"/>
</dbReference>
<dbReference type="SMR" id="B0TQG5"/>
<dbReference type="STRING" id="458817.Shal_4305"/>
<dbReference type="KEGG" id="shl:Shal_4305"/>
<dbReference type="eggNOG" id="COG0445">
    <property type="taxonomic scope" value="Bacteria"/>
</dbReference>
<dbReference type="HOGENOM" id="CLU_007831_2_2_6"/>
<dbReference type="OrthoDB" id="9815560at2"/>
<dbReference type="Proteomes" id="UP000001317">
    <property type="component" value="Chromosome"/>
</dbReference>
<dbReference type="GO" id="GO:0005829">
    <property type="term" value="C:cytosol"/>
    <property type="evidence" value="ECO:0007669"/>
    <property type="project" value="TreeGrafter"/>
</dbReference>
<dbReference type="GO" id="GO:0050660">
    <property type="term" value="F:flavin adenine dinucleotide binding"/>
    <property type="evidence" value="ECO:0007669"/>
    <property type="project" value="UniProtKB-UniRule"/>
</dbReference>
<dbReference type="GO" id="GO:0030488">
    <property type="term" value="P:tRNA methylation"/>
    <property type="evidence" value="ECO:0007669"/>
    <property type="project" value="TreeGrafter"/>
</dbReference>
<dbReference type="GO" id="GO:0002098">
    <property type="term" value="P:tRNA wobble uridine modification"/>
    <property type="evidence" value="ECO:0007669"/>
    <property type="project" value="InterPro"/>
</dbReference>
<dbReference type="FunFam" id="1.10.10.1800:FF:000001">
    <property type="entry name" value="tRNA uridine 5-carboxymethylaminomethyl modification enzyme MnmG"/>
    <property type="match status" value="1"/>
</dbReference>
<dbReference type="FunFam" id="1.10.150.570:FF:000001">
    <property type="entry name" value="tRNA uridine 5-carboxymethylaminomethyl modification enzyme MnmG"/>
    <property type="match status" value="1"/>
</dbReference>
<dbReference type="FunFam" id="3.50.50.60:FF:000002">
    <property type="entry name" value="tRNA uridine 5-carboxymethylaminomethyl modification enzyme MnmG"/>
    <property type="match status" value="1"/>
</dbReference>
<dbReference type="FunFam" id="3.50.50.60:FF:000010">
    <property type="entry name" value="tRNA uridine 5-carboxymethylaminomethyl modification enzyme MnmG"/>
    <property type="match status" value="1"/>
</dbReference>
<dbReference type="Gene3D" id="3.50.50.60">
    <property type="entry name" value="FAD/NAD(P)-binding domain"/>
    <property type="match status" value="2"/>
</dbReference>
<dbReference type="Gene3D" id="1.10.150.570">
    <property type="entry name" value="GidA associated domain, C-terminal subdomain"/>
    <property type="match status" value="1"/>
</dbReference>
<dbReference type="Gene3D" id="1.10.10.1800">
    <property type="entry name" value="tRNA uridine 5-carboxymethylaminomethyl modification enzyme MnmG/GidA"/>
    <property type="match status" value="1"/>
</dbReference>
<dbReference type="HAMAP" id="MF_00129">
    <property type="entry name" value="MnmG_GidA"/>
    <property type="match status" value="1"/>
</dbReference>
<dbReference type="InterPro" id="IPR036188">
    <property type="entry name" value="FAD/NAD-bd_sf"/>
</dbReference>
<dbReference type="InterPro" id="IPR049312">
    <property type="entry name" value="GIDA_C_N"/>
</dbReference>
<dbReference type="InterPro" id="IPR004416">
    <property type="entry name" value="MnmG"/>
</dbReference>
<dbReference type="InterPro" id="IPR002218">
    <property type="entry name" value="MnmG-rel"/>
</dbReference>
<dbReference type="InterPro" id="IPR020595">
    <property type="entry name" value="MnmG-rel_CS"/>
</dbReference>
<dbReference type="InterPro" id="IPR026904">
    <property type="entry name" value="MnmG_C"/>
</dbReference>
<dbReference type="InterPro" id="IPR047001">
    <property type="entry name" value="MnmG_C_subdom"/>
</dbReference>
<dbReference type="InterPro" id="IPR044920">
    <property type="entry name" value="MnmG_C_subdom_sf"/>
</dbReference>
<dbReference type="InterPro" id="IPR040131">
    <property type="entry name" value="MnmG_N"/>
</dbReference>
<dbReference type="NCBIfam" id="TIGR00136">
    <property type="entry name" value="mnmG_gidA"/>
    <property type="match status" value="1"/>
</dbReference>
<dbReference type="PANTHER" id="PTHR11806">
    <property type="entry name" value="GLUCOSE INHIBITED DIVISION PROTEIN A"/>
    <property type="match status" value="1"/>
</dbReference>
<dbReference type="PANTHER" id="PTHR11806:SF0">
    <property type="entry name" value="PROTEIN MTO1 HOMOLOG, MITOCHONDRIAL"/>
    <property type="match status" value="1"/>
</dbReference>
<dbReference type="Pfam" id="PF01134">
    <property type="entry name" value="GIDA"/>
    <property type="match status" value="1"/>
</dbReference>
<dbReference type="Pfam" id="PF21680">
    <property type="entry name" value="GIDA_C_1st"/>
    <property type="match status" value="1"/>
</dbReference>
<dbReference type="Pfam" id="PF13932">
    <property type="entry name" value="SAM_GIDA_C"/>
    <property type="match status" value="1"/>
</dbReference>
<dbReference type="SMART" id="SM01228">
    <property type="entry name" value="GIDA_assoc_3"/>
    <property type="match status" value="1"/>
</dbReference>
<dbReference type="SUPFAM" id="SSF51905">
    <property type="entry name" value="FAD/NAD(P)-binding domain"/>
    <property type="match status" value="1"/>
</dbReference>
<dbReference type="PROSITE" id="PS01280">
    <property type="entry name" value="GIDA_1"/>
    <property type="match status" value="1"/>
</dbReference>
<dbReference type="PROSITE" id="PS01281">
    <property type="entry name" value="GIDA_2"/>
    <property type="match status" value="1"/>
</dbReference>
<sequence>MQFHERFDVIVVGGGHAGTEAALASARMGSKTLLLTHNIDTLGQMSCNPAIGGIGKGHLVKEIDALGGAMAVATDFAGIQFRTLNSSKGPAVRATRAQADRALYRHKIQEILQHQTNLRIFQQAVDDLVVENNKVIGVVTQMGLAFEAPAVVLTAGTFLGGKIHIGLENYSGGRAGDPPSIALAHRLRELPIRVGRLKTGTPPRIDANTIDFSLMTEQKGDNPLPVMSFIGDVNDHPEQVSCYITHTNERTHDIIRGGLDRSPMYSGIIEGIGPRYCPSIEDKINRFADKTSHQIFIEPEGLNTTEIYPNGISTSLPFDVQLNLVRSIKGMENAEIMRPGYAIEYDYFDPRDLKNSLETKAISGLFFAGQINGTTGYEEAGAQGLLAGMNASLQVQGKEAWAPRRDQAYLGVLVDDLSTLGTKEPYRMFTSRAEYRLLLREDNADLRLTEKGRELGLVDDKRWALFSEKMESIETELQRLRGQWIHPNSPLVEALNPNLNTPITREATFEDLLRRPEMDYPKLMSIDGFGPGLEDQRAAEQVQIQVKYSGYIQRQQGEIDKAIRHETTLLPLDLDYQEVPGLSNEVIAKMNEHKPETIGQASRISGMTPAAISILLVHLKKRGLLRKSA</sequence>
<evidence type="ECO:0000255" key="1">
    <source>
        <dbReference type="HAMAP-Rule" id="MF_00129"/>
    </source>
</evidence>
<organism>
    <name type="scientific">Shewanella halifaxensis (strain HAW-EB4)</name>
    <dbReference type="NCBI Taxonomy" id="458817"/>
    <lineage>
        <taxon>Bacteria</taxon>
        <taxon>Pseudomonadati</taxon>
        <taxon>Pseudomonadota</taxon>
        <taxon>Gammaproteobacteria</taxon>
        <taxon>Alteromonadales</taxon>
        <taxon>Shewanellaceae</taxon>
        <taxon>Shewanella</taxon>
    </lineage>
</organism>
<comment type="function">
    <text evidence="1">NAD-binding protein involved in the addition of a carboxymethylaminomethyl (cmnm) group at the wobble position (U34) of certain tRNAs, forming tRNA-cmnm(5)s(2)U34.</text>
</comment>
<comment type="cofactor">
    <cofactor evidence="1">
        <name>FAD</name>
        <dbReference type="ChEBI" id="CHEBI:57692"/>
    </cofactor>
</comment>
<comment type="subunit">
    <text evidence="1">Homodimer. Heterotetramer of two MnmE and two MnmG subunits.</text>
</comment>
<comment type="subcellular location">
    <subcellularLocation>
        <location evidence="1">Cytoplasm</location>
    </subcellularLocation>
</comment>
<comment type="similarity">
    <text evidence="1">Belongs to the MnmG family.</text>
</comment>
<proteinExistence type="inferred from homology"/>
<feature type="chain" id="PRO_1000076331" description="tRNA uridine 5-carboxymethylaminomethyl modification enzyme MnmG">
    <location>
        <begin position="1"/>
        <end position="629"/>
    </location>
</feature>
<feature type="binding site" evidence="1">
    <location>
        <begin position="13"/>
        <end position="18"/>
    </location>
    <ligand>
        <name>FAD</name>
        <dbReference type="ChEBI" id="CHEBI:57692"/>
    </ligand>
</feature>
<feature type="binding site" evidence="1">
    <location>
        <position position="125"/>
    </location>
    <ligand>
        <name>FAD</name>
        <dbReference type="ChEBI" id="CHEBI:57692"/>
    </ligand>
</feature>
<feature type="binding site" evidence="1">
    <location>
        <position position="180"/>
    </location>
    <ligand>
        <name>FAD</name>
        <dbReference type="ChEBI" id="CHEBI:57692"/>
    </ligand>
</feature>
<feature type="binding site" evidence="1">
    <location>
        <begin position="273"/>
        <end position="287"/>
    </location>
    <ligand>
        <name>NAD(+)</name>
        <dbReference type="ChEBI" id="CHEBI:57540"/>
    </ligand>
</feature>
<feature type="binding site" evidence="1">
    <location>
        <position position="370"/>
    </location>
    <ligand>
        <name>FAD</name>
        <dbReference type="ChEBI" id="CHEBI:57692"/>
    </ligand>
</feature>